<proteinExistence type="inferred from homology"/>
<keyword id="KW-0328">Glycosyltransferase</keyword>
<keyword id="KW-0808">Transferase</keyword>
<reference key="1">
    <citation type="journal article" date="2001" name="Science">
        <title>Mechanisms of evolution in Rickettsia conorii and R. prowazekii.</title>
        <authorList>
            <person name="Ogata H."/>
            <person name="Audic S."/>
            <person name="Renesto-Audiffren P."/>
            <person name="Fournier P.-E."/>
            <person name="Barbe V."/>
            <person name="Samson D."/>
            <person name="Roux V."/>
            <person name="Cossart P."/>
            <person name="Weissenbach J."/>
            <person name="Claverie J.-M."/>
            <person name="Raoult D."/>
        </authorList>
    </citation>
    <scope>NUCLEOTIDE SEQUENCE [LARGE SCALE GENOMIC DNA]</scope>
    <source>
        <strain>ATCC VR-613 / Malish 7</strain>
    </source>
</reference>
<dbReference type="EC" id="2.4.-.-"/>
<dbReference type="EMBL" id="AE006914">
    <property type="protein sequence ID" value="AAL02830.1"/>
    <property type="molecule type" value="Genomic_DNA"/>
</dbReference>
<dbReference type="PIR" id="D97736">
    <property type="entry name" value="D97736"/>
</dbReference>
<dbReference type="RefSeq" id="WP_010976952.1">
    <property type="nucleotide sequence ID" value="NC_003103.1"/>
</dbReference>
<dbReference type="SMR" id="Q92IX8"/>
<dbReference type="CAZy" id="GT2">
    <property type="family name" value="Glycosyltransferase Family 2"/>
</dbReference>
<dbReference type="GeneID" id="927876"/>
<dbReference type="KEGG" id="rco:RC0292"/>
<dbReference type="PATRIC" id="fig|272944.4.peg.332"/>
<dbReference type="HOGENOM" id="CLU_065962_1_0_5"/>
<dbReference type="Proteomes" id="UP000000816">
    <property type="component" value="Chromosome"/>
</dbReference>
<dbReference type="GO" id="GO:0016757">
    <property type="term" value="F:glycosyltransferase activity"/>
    <property type="evidence" value="ECO:0007669"/>
    <property type="project" value="UniProtKB-KW"/>
</dbReference>
<dbReference type="CDD" id="cd02511">
    <property type="entry name" value="Beta4Glucosyltransferase"/>
    <property type="match status" value="1"/>
</dbReference>
<dbReference type="Gene3D" id="3.90.550.10">
    <property type="entry name" value="Spore Coat Polysaccharide Biosynthesis Protein SpsA, Chain A"/>
    <property type="match status" value="1"/>
</dbReference>
<dbReference type="InterPro" id="IPR001173">
    <property type="entry name" value="Glyco_trans_2-like"/>
</dbReference>
<dbReference type="InterPro" id="IPR029044">
    <property type="entry name" value="Nucleotide-diphossugar_trans"/>
</dbReference>
<dbReference type="PANTHER" id="PTHR43630:SF2">
    <property type="entry name" value="GLYCOSYLTRANSFERASE"/>
    <property type="match status" value="1"/>
</dbReference>
<dbReference type="PANTHER" id="PTHR43630">
    <property type="entry name" value="POLY-BETA-1,6-N-ACETYL-D-GLUCOSAMINE SYNTHASE"/>
    <property type="match status" value="1"/>
</dbReference>
<dbReference type="Pfam" id="PF00535">
    <property type="entry name" value="Glycos_transf_2"/>
    <property type="match status" value="1"/>
</dbReference>
<dbReference type="SUPFAM" id="SSF53448">
    <property type="entry name" value="Nucleotide-diphospho-sugar transferases"/>
    <property type="match status" value="1"/>
</dbReference>
<gene>
    <name type="ordered locus">RC0292</name>
</gene>
<accession>Q92IX8</accession>
<evidence type="ECO:0000305" key="1"/>
<organism>
    <name type="scientific">Rickettsia conorii (strain ATCC VR-613 / Malish 7)</name>
    <dbReference type="NCBI Taxonomy" id="272944"/>
    <lineage>
        <taxon>Bacteria</taxon>
        <taxon>Pseudomonadati</taxon>
        <taxon>Pseudomonadota</taxon>
        <taxon>Alphaproteobacteria</taxon>
        <taxon>Rickettsiales</taxon>
        <taxon>Rickettsiaceae</taxon>
        <taxon>Rickettsieae</taxon>
        <taxon>Rickettsia</taxon>
        <taxon>spotted fever group</taxon>
    </lineage>
</organism>
<protein>
    <recommendedName>
        <fullName>Uncharacterized glycosyltransferase RC0292</fullName>
        <ecNumber>2.4.-.-</ecNumber>
    </recommendedName>
</protein>
<comment type="similarity">
    <text evidence="1">Belongs to the glycosyltransferase 2 family. WaaE/KdtX subfamily.</text>
</comment>
<name>Y292_RICCN</name>
<feature type="chain" id="PRO_0000293140" description="Uncharacterized glycosyltransferase RC0292">
    <location>
        <begin position="1"/>
        <end position="282"/>
    </location>
</feature>
<sequence>MNKSLTEKISAFIITKNESTRVARAINSVKNITDEVIVVDSESTDDTVAIAEKLGAKVVIKPWLGYVGQKSFAESLCVNDWVLNIDADEELSKELQDEIEYIFASHNQDRYLAYQIKLLIMHRNDQKPRMFAPFNKCTRLYNKKFASFANTVNSTTHDSVIFNKDVDFAGKIYLLNEAAYHYSGTSIEQLVTKANFYSNEQAKDLVKQGKKLSNFRLTTEMIWWFFKAFFIRRYFVFGVDGFVDSIIFAFARFLRLTKLRESSLKSKNVIASDYKERGNFMK</sequence>